<protein>
    <recommendedName>
        <fullName evidence="1">Large ribosomal subunit protein uL13</fullName>
    </recommendedName>
    <alternativeName>
        <fullName evidence="2">50S ribosomal protein L13</fullName>
    </alternativeName>
</protein>
<accession>A6X1V4</accession>
<evidence type="ECO:0000255" key="1">
    <source>
        <dbReference type="HAMAP-Rule" id="MF_01366"/>
    </source>
</evidence>
<evidence type="ECO:0000305" key="2"/>
<reference key="1">
    <citation type="journal article" date="2011" name="J. Bacteriol.">
        <title>Genome of Ochrobactrum anthropi ATCC 49188 T, a versatile opportunistic pathogen and symbiont of several eukaryotic hosts.</title>
        <authorList>
            <person name="Chain P.S."/>
            <person name="Lang D.M."/>
            <person name="Comerci D.J."/>
            <person name="Malfatti S.A."/>
            <person name="Vergez L.M."/>
            <person name="Shin M."/>
            <person name="Ugalde R.A."/>
            <person name="Garcia E."/>
            <person name="Tolmasky M.E."/>
        </authorList>
    </citation>
    <scope>NUCLEOTIDE SEQUENCE [LARGE SCALE GENOMIC DNA]</scope>
    <source>
        <strain>ATCC 49188 / DSM 6882 / CCUG 24695 / JCM 21032 / LMG 3331 / NBRC 15819 / NCTC 12168 / Alc 37</strain>
    </source>
</reference>
<gene>
    <name evidence="1" type="primary">rplM</name>
    <name type="ordered locus">Oant_2495</name>
</gene>
<name>RL13_BRUA4</name>
<comment type="function">
    <text evidence="1">This protein is one of the early assembly proteins of the 50S ribosomal subunit, although it is not seen to bind rRNA by itself. It is important during the early stages of 50S assembly.</text>
</comment>
<comment type="subunit">
    <text evidence="1">Part of the 50S ribosomal subunit.</text>
</comment>
<comment type="similarity">
    <text evidence="1">Belongs to the universal ribosomal protein uL13 family.</text>
</comment>
<feature type="chain" id="PRO_1000055426" description="Large ribosomal subunit protein uL13">
    <location>
        <begin position="1"/>
        <end position="154"/>
    </location>
</feature>
<proteinExistence type="inferred from homology"/>
<dbReference type="EMBL" id="CP000758">
    <property type="protein sequence ID" value="ABS15208.1"/>
    <property type="molecule type" value="Genomic_DNA"/>
</dbReference>
<dbReference type="RefSeq" id="WP_010661122.1">
    <property type="nucleotide sequence ID" value="NC_009667.1"/>
</dbReference>
<dbReference type="SMR" id="A6X1V4"/>
<dbReference type="STRING" id="439375.Oant_2495"/>
<dbReference type="GeneID" id="61317066"/>
<dbReference type="KEGG" id="oan:Oant_2495"/>
<dbReference type="eggNOG" id="COG0102">
    <property type="taxonomic scope" value="Bacteria"/>
</dbReference>
<dbReference type="HOGENOM" id="CLU_082184_2_0_5"/>
<dbReference type="PhylomeDB" id="A6X1V4"/>
<dbReference type="Proteomes" id="UP000002301">
    <property type="component" value="Chromosome 1"/>
</dbReference>
<dbReference type="GO" id="GO:0022625">
    <property type="term" value="C:cytosolic large ribosomal subunit"/>
    <property type="evidence" value="ECO:0007669"/>
    <property type="project" value="TreeGrafter"/>
</dbReference>
<dbReference type="GO" id="GO:0003729">
    <property type="term" value="F:mRNA binding"/>
    <property type="evidence" value="ECO:0007669"/>
    <property type="project" value="TreeGrafter"/>
</dbReference>
<dbReference type="GO" id="GO:0003735">
    <property type="term" value="F:structural constituent of ribosome"/>
    <property type="evidence" value="ECO:0007669"/>
    <property type="project" value="InterPro"/>
</dbReference>
<dbReference type="GO" id="GO:0017148">
    <property type="term" value="P:negative regulation of translation"/>
    <property type="evidence" value="ECO:0007669"/>
    <property type="project" value="TreeGrafter"/>
</dbReference>
<dbReference type="GO" id="GO:0006412">
    <property type="term" value="P:translation"/>
    <property type="evidence" value="ECO:0007669"/>
    <property type="project" value="UniProtKB-UniRule"/>
</dbReference>
<dbReference type="CDD" id="cd00392">
    <property type="entry name" value="Ribosomal_L13"/>
    <property type="match status" value="1"/>
</dbReference>
<dbReference type="FunFam" id="3.90.1180.10:FF:000001">
    <property type="entry name" value="50S ribosomal protein L13"/>
    <property type="match status" value="1"/>
</dbReference>
<dbReference type="Gene3D" id="3.90.1180.10">
    <property type="entry name" value="Ribosomal protein L13"/>
    <property type="match status" value="1"/>
</dbReference>
<dbReference type="HAMAP" id="MF_01366">
    <property type="entry name" value="Ribosomal_uL13"/>
    <property type="match status" value="1"/>
</dbReference>
<dbReference type="InterPro" id="IPR005822">
    <property type="entry name" value="Ribosomal_uL13"/>
</dbReference>
<dbReference type="InterPro" id="IPR005823">
    <property type="entry name" value="Ribosomal_uL13_bac-type"/>
</dbReference>
<dbReference type="InterPro" id="IPR036899">
    <property type="entry name" value="Ribosomal_uL13_sf"/>
</dbReference>
<dbReference type="NCBIfam" id="TIGR01066">
    <property type="entry name" value="rplM_bact"/>
    <property type="match status" value="1"/>
</dbReference>
<dbReference type="PANTHER" id="PTHR11545:SF2">
    <property type="entry name" value="LARGE RIBOSOMAL SUBUNIT PROTEIN UL13M"/>
    <property type="match status" value="1"/>
</dbReference>
<dbReference type="PANTHER" id="PTHR11545">
    <property type="entry name" value="RIBOSOMAL PROTEIN L13"/>
    <property type="match status" value="1"/>
</dbReference>
<dbReference type="Pfam" id="PF00572">
    <property type="entry name" value="Ribosomal_L13"/>
    <property type="match status" value="1"/>
</dbReference>
<dbReference type="PIRSF" id="PIRSF002181">
    <property type="entry name" value="Ribosomal_L13"/>
    <property type="match status" value="1"/>
</dbReference>
<dbReference type="SUPFAM" id="SSF52161">
    <property type="entry name" value="Ribosomal protein L13"/>
    <property type="match status" value="1"/>
</dbReference>
<keyword id="KW-1185">Reference proteome</keyword>
<keyword id="KW-0687">Ribonucleoprotein</keyword>
<keyword id="KW-0689">Ribosomal protein</keyword>
<organism>
    <name type="scientific">Brucella anthropi (strain ATCC 49188 / DSM 6882 / CCUG 24695 / JCM 21032 / LMG 3331 / NBRC 15819 / NCTC 12168 / Alc 37)</name>
    <name type="common">Ochrobactrum anthropi</name>
    <dbReference type="NCBI Taxonomy" id="439375"/>
    <lineage>
        <taxon>Bacteria</taxon>
        <taxon>Pseudomonadati</taxon>
        <taxon>Pseudomonadota</taxon>
        <taxon>Alphaproteobacteria</taxon>
        <taxon>Hyphomicrobiales</taxon>
        <taxon>Brucellaceae</taxon>
        <taxon>Brucella/Ochrobactrum group</taxon>
        <taxon>Brucella</taxon>
    </lineage>
</organism>
<sequence>MATFSQKPAEVVKKWVLIDAEGLVLGRLATIVANRLRGKHKATFTPHVDDGDNVVIINADKVVLTGKKYTDKVYYWHTGHPGGIKERTARQILEGRFPERVVEKAIERMIPRGPLGRRQMKNLRVYAGPNHQQEAQQPEVLDVAALNRKNKGNA</sequence>